<comment type="function">
    <text evidence="2">Component of the ubiquinol-cytochrome c reductase complex (complex III or cytochrome b-c1 complex) that is part of the mitochondrial respiratory chain. The b-c1 complex mediates electron transfer from ubiquinol to cytochrome c. Contributes to the generation of a proton gradient across the mitochondrial membrane that is then used for ATP synthesis.</text>
</comment>
<comment type="cofactor">
    <cofactor evidence="2">
        <name>heme b</name>
        <dbReference type="ChEBI" id="CHEBI:60344"/>
    </cofactor>
    <text evidence="2">Binds 2 heme b groups non-covalently.</text>
</comment>
<comment type="subunit">
    <text evidence="2">The cytochrome bc1 complex contains 11 subunits: 3 respiratory subunits (MT-CYB, CYC1 and UQCRFS1), 2 core proteins (UQCRC1 and UQCRC2) and 6 low-molecular weight proteins (UQCRH/QCR6, UQCRB/QCR7, UQCRQ/QCR8, UQCR10/QCR9, UQCR11/QCR10 and a cleavage product of UQCRFS1). This cytochrome bc1 complex then forms a dimer.</text>
</comment>
<comment type="subcellular location">
    <subcellularLocation>
        <location evidence="2">Mitochondrion inner membrane</location>
        <topology evidence="2">Multi-pass membrane protein</topology>
    </subcellularLocation>
</comment>
<comment type="miscellaneous">
    <text evidence="1">Heme 1 (or BL or b562) is low-potential and absorbs at about 562 nm, and heme 2 (or BH or b566) is high-potential and absorbs at about 566 nm.</text>
</comment>
<comment type="similarity">
    <text evidence="3 4">Belongs to the cytochrome b family.</text>
</comment>
<comment type="caution">
    <text evidence="2">The full-length protein contains only eight transmembrane helices, not nine as predicted by bioinformatics tools.</text>
</comment>
<feature type="chain" id="PRO_0000060548" description="Cytochrome b">
    <location>
        <begin position="1"/>
        <end position="379"/>
    </location>
</feature>
<feature type="transmembrane region" description="Helical" evidence="2">
    <location>
        <begin position="33"/>
        <end position="53"/>
    </location>
</feature>
<feature type="transmembrane region" description="Helical" evidence="2">
    <location>
        <begin position="77"/>
        <end position="98"/>
    </location>
</feature>
<feature type="transmembrane region" description="Helical" evidence="2">
    <location>
        <begin position="113"/>
        <end position="133"/>
    </location>
</feature>
<feature type="transmembrane region" description="Helical" evidence="2">
    <location>
        <begin position="178"/>
        <end position="198"/>
    </location>
</feature>
<feature type="transmembrane region" description="Helical" evidence="2">
    <location>
        <begin position="226"/>
        <end position="246"/>
    </location>
</feature>
<feature type="transmembrane region" description="Helical" evidence="2">
    <location>
        <begin position="288"/>
        <end position="308"/>
    </location>
</feature>
<feature type="transmembrane region" description="Helical" evidence="2">
    <location>
        <begin position="320"/>
        <end position="340"/>
    </location>
</feature>
<feature type="transmembrane region" description="Helical" evidence="2">
    <location>
        <begin position="347"/>
        <end position="367"/>
    </location>
</feature>
<feature type="binding site" description="axial binding residue" evidence="2">
    <location>
        <position position="83"/>
    </location>
    <ligand>
        <name>heme b</name>
        <dbReference type="ChEBI" id="CHEBI:60344"/>
        <label>b562</label>
    </ligand>
    <ligandPart>
        <name>Fe</name>
        <dbReference type="ChEBI" id="CHEBI:18248"/>
    </ligandPart>
</feature>
<feature type="binding site" description="axial binding residue" evidence="2">
    <location>
        <position position="97"/>
    </location>
    <ligand>
        <name>heme b</name>
        <dbReference type="ChEBI" id="CHEBI:60344"/>
        <label>b566</label>
    </ligand>
    <ligandPart>
        <name>Fe</name>
        <dbReference type="ChEBI" id="CHEBI:18248"/>
    </ligandPart>
</feature>
<feature type="binding site" description="axial binding residue" evidence="2">
    <location>
        <position position="182"/>
    </location>
    <ligand>
        <name>heme b</name>
        <dbReference type="ChEBI" id="CHEBI:60344"/>
        <label>b562</label>
    </ligand>
    <ligandPart>
        <name>Fe</name>
        <dbReference type="ChEBI" id="CHEBI:18248"/>
    </ligandPart>
</feature>
<feature type="binding site" description="axial binding residue" evidence="2">
    <location>
        <position position="196"/>
    </location>
    <ligand>
        <name>heme b</name>
        <dbReference type="ChEBI" id="CHEBI:60344"/>
        <label>b566</label>
    </ligand>
    <ligandPart>
        <name>Fe</name>
        <dbReference type="ChEBI" id="CHEBI:18248"/>
    </ligandPart>
</feature>
<feature type="binding site" evidence="2">
    <location>
        <position position="201"/>
    </location>
    <ligand>
        <name>a ubiquinone</name>
        <dbReference type="ChEBI" id="CHEBI:16389"/>
    </ligand>
</feature>
<evidence type="ECO:0000250" key="1"/>
<evidence type="ECO:0000250" key="2">
    <source>
        <dbReference type="UniProtKB" id="P00157"/>
    </source>
</evidence>
<evidence type="ECO:0000255" key="3">
    <source>
        <dbReference type="PROSITE-ProRule" id="PRU00967"/>
    </source>
</evidence>
<evidence type="ECO:0000255" key="4">
    <source>
        <dbReference type="PROSITE-ProRule" id="PRU00968"/>
    </source>
</evidence>
<geneLocation type="mitochondrion"/>
<gene>
    <name type="primary">MT-CYB</name>
    <name type="synonym">COB</name>
    <name type="synonym">CYTB</name>
    <name type="synonym">MTCYB</name>
</gene>
<accession>P21717</accession>
<dbReference type="EMBL" id="M35697">
    <property type="protein sequence ID" value="AAA16983.2"/>
    <property type="molecule type" value="Genomic_DNA"/>
</dbReference>
<dbReference type="PIR" id="D23725">
    <property type="entry name" value="D23725"/>
</dbReference>
<dbReference type="SMR" id="P21717"/>
<dbReference type="GO" id="GO:0005743">
    <property type="term" value="C:mitochondrial inner membrane"/>
    <property type="evidence" value="ECO:0007669"/>
    <property type="project" value="UniProtKB-SubCell"/>
</dbReference>
<dbReference type="GO" id="GO:0045275">
    <property type="term" value="C:respiratory chain complex III"/>
    <property type="evidence" value="ECO:0007669"/>
    <property type="project" value="InterPro"/>
</dbReference>
<dbReference type="GO" id="GO:0046872">
    <property type="term" value="F:metal ion binding"/>
    <property type="evidence" value="ECO:0007669"/>
    <property type="project" value="UniProtKB-KW"/>
</dbReference>
<dbReference type="GO" id="GO:0008121">
    <property type="term" value="F:ubiquinol-cytochrome-c reductase activity"/>
    <property type="evidence" value="ECO:0007669"/>
    <property type="project" value="InterPro"/>
</dbReference>
<dbReference type="GO" id="GO:0006122">
    <property type="term" value="P:mitochondrial electron transport, ubiquinol to cytochrome c"/>
    <property type="evidence" value="ECO:0007669"/>
    <property type="project" value="TreeGrafter"/>
</dbReference>
<dbReference type="CDD" id="cd00290">
    <property type="entry name" value="cytochrome_b_C"/>
    <property type="match status" value="1"/>
</dbReference>
<dbReference type="CDD" id="cd00284">
    <property type="entry name" value="Cytochrome_b_N"/>
    <property type="match status" value="1"/>
</dbReference>
<dbReference type="FunFam" id="1.20.810.10:FF:000002">
    <property type="entry name" value="Cytochrome b"/>
    <property type="match status" value="1"/>
</dbReference>
<dbReference type="Gene3D" id="1.20.810.10">
    <property type="entry name" value="Cytochrome Bc1 Complex, Chain C"/>
    <property type="match status" value="1"/>
</dbReference>
<dbReference type="InterPro" id="IPR005798">
    <property type="entry name" value="Cyt_b/b6_C"/>
</dbReference>
<dbReference type="InterPro" id="IPR036150">
    <property type="entry name" value="Cyt_b/b6_C_sf"/>
</dbReference>
<dbReference type="InterPro" id="IPR005797">
    <property type="entry name" value="Cyt_b/b6_N"/>
</dbReference>
<dbReference type="InterPro" id="IPR027387">
    <property type="entry name" value="Cytb/b6-like_sf"/>
</dbReference>
<dbReference type="InterPro" id="IPR030689">
    <property type="entry name" value="Cytochrome_b"/>
</dbReference>
<dbReference type="InterPro" id="IPR048260">
    <property type="entry name" value="Cytochrome_b_C_euk/bac"/>
</dbReference>
<dbReference type="InterPro" id="IPR048259">
    <property type="entry name" value="Cytochrome_b_N_euk/bac"/>
</dbReference>
<dbReference type="InterPro" id="IPR016174">
    <property type="entry name" value="Di-haem_cyt_TM"/>
</dbReference>
<dbReference type="PANTHER" id="PTHR19271">
    <property type="entry name" value="CYTOCHROME B"/>
    <property type="match status" value="1"/>
</dbReference>
<dbReference type="PANTHER" id="PTHR19271:SF16">
    <property type="entry name" value="CYTOCHROME B"/>
    <property type="match status" value="1"/>
</dbReference>
<dbReference type="Pfam" id="PF00032">
    <property type="entry name" value="Cytochrom_B_C"/>
    <property type="match status" value="1"/>
</dbReference>
<dbReference type="Pfam" id="PF00033">
    <property type="entry name" value="Cytochrome_B"/>
    <property type="match status" value="1"/>
</dbReference>
<dbReference type="PIRSF" id="PIRSF038885">
    <property type="entry name" value="COB"/>
    <property type="match status" value="1"/>
</dbReference>
<dbReference type="SUPFAM" id="SSF81648">
    <property type="entry name" value="a domain/subunit of cytochrome bc1 complex (Ubiquinol-cytochrome c reductase)"/>
    <property type="match status" value="1"/>
</dbReference>
<dbReference type="SUPFAM" id="SSF81342">
    <property type="entry name" value="Transmembrane di-heme cytochromes"/>
    <property type="match status" value="1"/>
</dbReference>
<dbReference type="PROSITE" id="PS51003">
    <property type="entry name" value="CYTB_CTER"/>
    <property type="match status" value="1"/>
</dbReference>
<dbReference type="PROSITE" id="PS51002">
    <property type="entry name" value="CYTB_NTER"/>
    <property type="match status" value="1"/>
</dbReference>
<name>CYB_AKOKO</name>
<reference key="1">
    <citation type="submission" date="2003-12" db="EMBL/GenBank/DDBJ databases">
        <title>Molecular phylogenetics and diversification of South American grass mice, genus Akodon.</title>
        <authorList>
            <person name="Smith M.F."/>
            <person name="Patton J.L."/>
        </authorList>
    </citation>
    <scope>NUCLEOTIDE SEQUENCE [GENOMIC DNA]</scope>
    <source>
        <strain>Isolate MVZ 171665</strain>
        <tissue>Liver</tissue>
    </source>
</reference>
<reference key="2">
    <citation type="journal article" date="1993" name="Biol. J. Linn. Soc. Lond.">
        <title>The diversification of South American murid rodents: evidence from mitochondrial DNA sequence data for the akodontine tribe.</title>
        <authorList>
            <person name="Smith M.F."/>
            <person name="Patton J.L."/>
        </authorList>
    </citation>
    <scope>NUCLEOTIDE SEQUENCE [GENOMIC DNA] OF 1-267</scope>
    <source>
        <strain>Isolate MVZ 171665</strain>
        <tissue>Liver</tissue>
    </source>
</reference>
<reference key="3">
    <citation type="journal article" date="1991" name="Mol. Biol. Evol.">
        <title>Variation in mitochondrial cytochrome b sequence in natural populations of South American akodontine rodents (Muridae: Sigmodontinae).</title>
        <authorList>
            <person name="Smith M.F."/>
            <person name="Patton J.L."/>
        </authorList>
    </citation>
    <scope>NUCLEOTIDE SEQUENCE [GENOMIC DNA] OF 1-133</scope>
    <source>
        <strain>Isolate MVZ 171665</strain>
        <strain>Isolate MVZ 171666</strain>
        <tissue>Liver</tissue>
    </source>
</reference>
<keyword id="KW-0249">Electron transport</keyword>
<keyword id="KW-0349">Heme</keyword>
<keyword id="KW-0408">Iron</keyword>
<keyword id="KW-0472">Membrane</keyword>
<keyword id="KW-0479">Metal-binding</keyword>
<keyword id="KW-0496">Mitochondrion</keyword>
<keyword id="KW-0999">Mitochondrion inner membrane</keyword>
<keyword id="KW-0679">Respiratory chain</keyword>
<keyword id="KW-0812">Transmembrane</keyword>
<keyword id="KW-1133">Transmembrane helix</keyword>
<keyword id="KW-0813">Transport</keyword>
<keyword id="KW-0830">Ubiquinone</keyword>
<organism>
    <name type="scientific">Akodon kofordi</name>
    <name type="common">Koford's grass mouse</name>
    <dbReference type="NCBI Taxonomy" id="10074"/>
    <lineage>
        <taxon>Eukaryota</taxon>
        <taxon>Metazoa</taxon>
        <taxon>Chordata</taxon>
        <taxon>Craniata</taxon>
        <taxon>Vertebrata</taxon>
        <taxon>Euteleostomi</taxon>
        <taxon>Mammalia</taxon>
        <taxon>Eutheria</taxon>
        <taxon>Euarchontoglires</taxon>
        <taxon>Glires</taxon>
        <taxon>Rodentia</taxon>
        <taxon>Myomorpha</taxon>
        <taxon>Muroidea</taxon>
        <taxon>Cricetidae</taxon>
        <taxon>Sigmodontinae</taxon>
        <taxon>Akodon</taxon>
    </lineage>
</organism>
<sequence>MKILRKNHPLLKIINHSFIDLPTPSNISSWWNFGSLLGMCLMIQILTGLFLAMHYTSDTTTAFSSVAHICRDVNYGWLIRYLHANGASMFFICLFIHVGRGIYYGSYALSETWNIGIILFLMTMATAFVGYVLPWGQMSFWGATVITNLLSAIPYIGSTLVEWIWGGFSVDKATLTRFFAFHFILPFIIAAFALVHLLFLHETGSNNPSGLNSDSDKIPFHPYYTTKDLLGIFLLLLVLMILALFFPDVLGDPDNFTPANPLNTPAHIKPEWYFLFAYAILRSIPNKLGGVLALILSILILAAFPLLNNSKQHGLIFRPVTQVIYWIFTANLLVLTWIGGQPVEYPFTMIGQIASITYLAIIIILMPISNTIENNIIKL</sequence>
<protein>
    <recommendedName>
        <fullName>Cytochrome b</fullName>
    </recommendedName>
    <alternativeName>
        <fullName>Complex III subunit 3</fullName>
    </alternativeName>
    <alternativeName>
        <fullName>Complex III subunit III</fullName>
    </alternativeName>
    <alternativeName>
        <fullName>Cytochrome b-c1 complex subunit 3</fullName>
    </alternativeName>
    <alternativeName>
        <fullName>Ubiquinol-cytochrome-c reductase complex cytochrome b subunit</fullName>
    </alternativeName>
</protein>
<proteinExistence type="inferred from homology"/>